<feature type="chain" id="PRO_0000221906" description="Core-capsid bridging protein">
    <location>
        <begin position="1"/>
        <end position="358"/>
    </location>
</feature>
<feature type="region of interest" description="Disordered" evidence="2">
    <location>
        <begin position="296"/>
        <end position="331"/>
    </location>
</feature>
<feature type="compositionally biased region" description="Basic residues" evidence="2">
    <location>
        <begin position="312"/>
        <end position="329"/>
    </location>
</feature>
<organism>
    <name type="scientific">Human adenovirus F serotype 40</name>
    <name type="common">HAdV-40</name>
    <name type="synonym">Human adenovirus 40</name>
    <dbReference type="NCBI Taxonomy" id="28284"/>
    <lineage>
        <taxon>Viruses</taxon>
        <taxon>Varidnaviria</taxon>
        <taxon>Bamfordvirae</taxon>
        <taxon>Preplasmiviricota</taxon>
        <taxon>Tectiliviricetes</taxon>
        <taxon>Rowavirales</taxon>
        <taxon>Adenoviridae</taxon>
        <taxon>Mastadenovirus</taxon>
        <taxon>Human mastadenovirus F</taxon>
    </lineage>
</organism>
<comment type="function">
    <text evidence="1">Associates loosely with the viral DNA to form an outer shell around the nucleoprotein-DNA complex and links it with the capsid by binding the endosome lysis protein. Dissociates from the viral genome during entry. Might be involved in nuclear capsid assembly of the viral particles through its association with NPM1/nucleophosmin.</text>
</comment>
<comment type="subunit">
    <text evidence="1">Monomer. Homodimer. Exists in equilibrium between monomers and dimers in solution. Interacts with the histone-like nucleoprotein; this interactions bridge the virus core to the capsid. Interacts with core protein X; this interactions bridge the virus core to the capsid. Interacts with the endosome lysis protein VI; this interactions bridge the virus core to the capsid. Interacts with the peripentonal hexons. Interacts with host NPM1; this interaction might play a role in virus assembly.</text>
</comment>
<comment type="subcellular location">
    <subcellularLocation>
        <location evidence="1">Virion</location>
    </subcellularLocation>
    <subcellularLocation>
        <location evidence="1">Host nucleus</location>
        <location evidence="1">Host nucleolus</location>
    </subcellularLocation>
    <text evidence="1">Located inside the capsid (core). Present in 157 copies per virion. Localizes in the nucleoli during infection, then translocates from the nucleoli to the nucleoplasm as the infection progresses and is finally incorporated into the viral particles.</text>
</comment>
<comment type="induction">
    <text evidence="1">Expressed in the late phase of the viral replicative cycle.</text>
</comment>
<comment type="miscellaneous">
    <text evidence="1">All late proteins expressed from the major late promoter are produced by alternative splicing and alternative polyadenylation of the same gene giving rise to non-overlapping ORFs. A leader sequence is present in the N-terminus of all these mRNAs and is recognized by the viral shutoff protein to provide expression although conventional translation via ribosome scanning from the cap has been shut off in the host cell.</text>
</comment>
<comment type="miscellaneous">
    <text evidence="1">This protein is only encoded by mastadenoviruses, and may therefore play a role in mammals tropism.</text>
</comment>
<comment type="similarity">
    <text evidence="1 3">Belongs to the adenoviridae core-capsid bridging protein family.</text>
</comment>
<keyword id="KW-0238">DNA-binding</keyword>
<keyword id="KW-1048">Host nucleus</keyword>
<keyword id="KW-0426">Late protein</keyword>
<keyword id="KW-1185">Reference proteome</keyword>
<keyword id="KW-0118">Viral capsid assembly</keyword>
<keyword id="KW-1188">Viral release from host cell</keyword>
<keyword id="KW-0946">Virion</keyword>
<gene>
    <name evidence="1" type="primary">L2</name>
</gene>
<sequence>MSKRKFKEELLEALVPEIYGPAADVKPDIKPRVLKRVKKREKKEEKEEAGLLDDGVEFVRSFAPRRRVQWRGRKVQRVLRPGTTVVFTPGERSVTRALKRDYDEVYADEDILEQAAQQVGEFAYGKRGRYGELGLLLDQSNPTPSLKPATAQQILPVTEIKRGVKRENKDELQPTMQLMVPKRQKLEEVLENMKVDPSVEPEVKVRPIKEIGPGLGVQTVDIQIPVRASSSTVSTAVEAMETQPELPEAVARAVAATREMGLQTDPWYEFVAPTSRPRSRKYTTANSILPEYALHPSITPTPGYRGTTFKPSRTRSTRRRRSVRRRSRRTAPISVRRVTRRGRTLTLPNARYHPSILV</sequence>
<organismHost>
    <name type="scientific">Homo sapiens</name>
    <name type="common">Human</name>
    <dbReference type="NCBI Taxonomy" id="9606"/>
</organismHost>
<name>CORE5_ADE40</name>
<evidence type="ECO:0000255" key="1">
    <source>
        <dbReference type="HAMAP-Rule" id="MF_04053"/>
    </source>
</evidence>
<evidence type="ECO:0000256" key="2">
    <source>
        <dbReference type="SAM" id="MobiDB-lite"/>
    </source>
</evidence>
<evidence type="ECO:0000305" key="3"/>
<reference key="1">
    <citation type="journal article" date="1993" name="J. Mol. Biol.">
        <title>The DNA sequence of adenovirus type 40.</title>
        <authorList>
            <person name="Davison A.J."/>
            <person name="Telford E.A."/>
            <person name="Watson M.S."/>
            <person name="McBride K."/>
            <person name="Mautner V."/>
        </authorList>
    </citation>
    <scope>NUCLEOTIDE SEQUENCE [LARGE SCALE GENOMIC DNA]</scope>
    <source>
        <strain>Dugan</strain>
    </source>
</reference>
<protein>
    <recommendedName>
        <fullName evidence="1">Core-capsid bridging protein</fullName>
    </recommendedName>
    <alternativeName>
        <fullName evidence="1">Core protein V</fullName>
    </alternativeName>
</protein>
<accession>P48753</accession>
<dbReference type="EMBL" id="L19443">
    <property type="protein sequence ID" value="AAC13964.1"/>
    <property type="molecule type" value="Genomic_DNA"/>
</dbReference>
<dbReference type="RefSeq" id="NP_040859.1">
    <property type="nucleotide sequence ID" value="NC_001454.1"/>
</dbReference>
<dbReference type="SMR" id="P48753"/>
<dbReference type="DNASU" id="2715931"/>
<dbReference type="GeneID" id="2715931"/>
<dbReference type="Proteomes" id="UP000151954">
    <property type="component" value="Segment"/>
</dbReference>
<dbReference type="GO" id="GO:0044196">
    <property type="term" value="C:host cell nucleolus"/>
    <property type="evidence" value="ECO:0007669"/>
    <property type="project" value="UniProtKB-SubCell"/>
</dbReference>
<dbReference type="GO" id="GO:0044423">
    <property type="term" value="C:virion component"/>
    <property type="evidence" value="ECO:0007669"/>
    <property type="project" value="UniProtKB-UniRule"/>
</dbReference>
<dbReference type="GO" id="GO:0003677">
    <property type="term" value="F:DNA binding"/>
    <property type="evidence" value="ECO:0007669"/>
    <property type="project" value="UniProtKB-UniRule"/>
</dbReference>
<dbReference type="GO" id="GO:0019076">
    <property type="term" value="P:viral release from host cell"/>
    <property type="evidence" value="ECO:0007669"/>
    <property type="project" value="UniProtKB-UniRule"/>
</dbReference>
<dbReference type="HAMAP" id="MF_04053">
    <property type="entry name" value="ADV_CORE5"/>
    <property type="match status" value="1"/>
</dbReference>
<dbReference type="InterPro" id="IPR005608">
    <property type="entry name" value="Adeno_V"/>
</dbReference>
<dbReference type="Pfam" id="PF03910">
    <property type="entry name" value="Adeno_PV"/>
    <property type="match status" value="1"/>
</dbReference>
<proteinExistence type="inferred from homology"/>